<evidence type="ECO:0000255" key="1">
    <source>
        <dbReference type="HAMAP-Rule" id="MF_01457"/>
    </source>
</evidence>
<gene>
    <name evidence="1" type="primary">ycgR</name>
    <name type="ordered locus">Mmol_1565</name>
</gene>
<organism>
    <name type="scientific">Methylotenera mobilis (strain JLW8 / ATCC BAA-1282 / DSM 17540)</name>
    <dbReference type="NCBI Taxonomy" id="583345"/>
    <lineage>
        <taxon>Bacteria</taxon>
        <taxon>Pseudomonadati</taxon>
        <taxon>Pseudomonadota</taxon>
        <taxon>Betaproteobacteria</taxon>
        <taxon>Nitrosomonadales</taxon>
        <taxon>Methylophilaceae</taxon>
        <taxon>Methylotenera</taxon>
    </lineage>
</organism>
<name>YCGR_METML</name>
<accession>C6WX20</accession>
<sequence>MEHAAFVHNEEQYIVHNPKEVTQIINDLIKHKSMIKVTFNHGADVYLTSIISIDAKTGAVYLDVGVDDEFNRRLLASNHVVFIKEDGVKIKWTSAHIAGVELKDGKAIKIALPKDMVRLQRRDFYRFATPVANPVVCKIPVPDVLNPAEETILELSLVDVSLGGIGTLVAAPLNPALVLGQAFNGCKIGFPDVGETNLTLKVKNITEIHVQDVMTKYRVGFEYVEPSRGNEGLINRYVYILERQAIALAHGAA</sequence>
<comment type="function">
    <text evidence="1">Acts as a flagellar brake, regulating swimming and swarming in a bis-(3'-5') cyclic diguanylic acid (c-di-GMP)-dependent manner. Binds 1 c-di-GMP dimer per subunit. Increasing levels of c-di-GMP lead to decreased motility.</text>
</comment>
<comment type="subunit">
    <text evidence="1">Monomer. Interacts with the flagellar basal bodies.</text>
</comment>
<comment type="subcellular location">
    <subcellularLocation>
        <location evidence="1">Bacterial flagellum basal body</location>
    </subcellularLocation>
</comment>
<comment type="similarity">
    <text evidence="1">Belongs to the YcgR family.</text>
</comment>
<dbReference type="EMBL" id="CP001672">
    <property type="protein sequence ID" value="ACT48469.1"/>
    <property type="molecule type" value="Genomic_DNA"/>
</dbReference>
<dbReference type="RefSeq" id="WP_015832504.1">
    <property type="nucleotide sequence ID" value="NC_012968.1"/>
</dbReference>
<dbReference type="SMR" id="C6WX20"/>
<dbReference type="STRING" id="583345.Mmol_1565"/>
<dbReference type="KEGG" id="mmb:Mmol_1565"/>
<dbReference type="eggNOG" id="COG5581">
    <property type="taxonomic scope" value="Bacteria"/>
</dbReference>
<dbReference type="HOGENOM" id="CLU_086025_0_0_4"/>
<dbReference type="OrthoDB" id="5572581at2"/>
<dbReference type="Proteomes" id="UP000002742">
    <property type="component" value="Chromosome"/>
</dbReference>
<dbReference type="GO" id="GO:0009425">
    <property type="term" value="C:bacterial-type flagellum basal body"/>
    <property type="evidence" value="ECO:0007669"/>
    <property type="project" value="UniProtKB-SubCell"/>
</dbReference>
<dbReference type="GO" id="GO:0035438">
    <property type="term" value="F:cyclic-di-GMP binding"/>
    <property type="evidence" value="ECO:0007669"/>
    <property type="project" value="UniProtKB-UniRule"/>
</dbReference>
<dbReference type="GO" id="GO:0071973">
    <property type="term" value="P:bacterial-type flagellum-dependent cell motility"/>
    <property type="evidence" value="ECO:0007669"/>
    <property type="project" value="UniProtKB-UniRule"/>
</dbReference>
<dbReference type="GO" id="GO:0071945">
    <property type="term" value="P:regulation of bacterial-type flagellum-dependent cell motility by regulation of motor speed"/>
    <property type="evidence" value="ECO:0007669"/>
    <property type="project" value="UniProtKB-UniRule"/>
</dbReference>
<dbReference type="Gene3D" id="2.30.110.10">
    <property type="entry name" value="Electron Transport, Fmn-binding Protein, Chain A"/>
    <property type="match status" value="1"/>
</dbReference>
<dbReference type="Gene3D" id="2.40.10.220">
    <property type="entry name" value="predicted glycosyltransferase like domains"/>
    <property type="match status" value="1"/>
</dbReference>
<dbReference type="HAMAP" id="MF_01457">
    <property type="entry name" value="YcgR"/>
    <property type="match status" value="1"/>
</dbReference>
<dbReference type="InterPro" id="IPR009875">
    <property type="entry name" value="PilZ_domain"/>
</dbReference>
<dbReference type="InterPro" id="IPR012349">
    <property type="entry name" value="Split_barrel_FMN-bd"/>
</dbReference>
<dbReference type="InterPro" id="IPR023787">
    <property type="entry name" value="T3SS_YcgR"/>
</dbReference>
<dbReference type="InterPro" id="IPR009926">
    <property type="entry name" value="T3SS_YcgR_PilZN"/>
</dbReference>
<dbReference type="Pfam" id="PF07238">
    <property type="entry name" value="PilZ"/>
    <property type="match status" value="1"/>
</dbReference>
<dbReference type="Pfam" id="PF07317">
    <property type="entry name" value="PilZN"/>
    <property type="match status" value="1"/>
</dbReference>
<protein>
    <recommendedName>
        <fullName evidence="1">Flagellar brake protein YcgR</fullName>
    </recommendedName>
    <alternativeName>
        <fullName evidence="1">Cyclic di-GMP binding protein YcgR</fullName>
    </alternativeName>
</protein>
<feature type="chain" id="PRO_0000395278" description="Flagellar brake protein YcgR">
    <location>
        <begin position="1"/>
        <end position="253"/>
    </location>
</feature>
<feature type="domain" description="PilZ" evidence="1">
    <location>
        <begin position="120"/>
        <end position="239"/>
    </location>
</feature>
<proteinExistence type="inferred from homology"/>
<reference key="1">
    <citation type="submission" date="2009-07" db="EMBL/GenBank/DDBJ databases">
        <title>Complete sequence of Methylotenera mobilis JLW8.</title>
        <authorList>
            <consortium name="US DOE Joint Genome Institute"/>
            <person name="Lucas S."/>
            <person name="Copeland A."/>
            <person name="Lapidus A."/>
            <person name="Glavina del Rio T."/>
            <person name="Tice H."/>
            <person name="Bruce D."/>
            <person name="Goodwin L."/>
            <person name="Pitluck S."/>
            <person name="LaButti K.M."/>
            <person name="Clum A."/>
            <person name="Larimer F."/>
            <person name="Land M."/>
            <person name="Hauser L."/>
            <person name="Kyrpides N."/>
            <person name="Mikhailova N."/>
            <person name="Kayluzhnaya M."/>
            <person name="Chistoserdova L."/>
        </authorList>
    </citation>
    <scope>NUCLEOTIDE SEQUENCE [LARGE SCALE GENOMIC DNA]</scope>
    <source>
        <strain>JLW8 / ATCC BAA-1282 / DSM 17540</strain>
    </source>
</reference>
<keyword id="KW-0975">Bacterial flagellum</keyword>
<keyword id="KW-0973">c-di-GMP</keyword>
<keyword id="KW-0547">Nucleotide-binding</keyword>
<keyword id="KW-1185">Reference proteome</keyword>